<organism>
    <name type="scientific">Dothistroma septosporum (strain NZE10 / CBS 128990)</name>
    <name type="common">Red band needle blight fungus</name>
    <name type="synonym">Mycosphaerella pini</name>
    <dbReference type="NCBI Taxonomy" id="675120"/>
    <lineage>
        <taxon>Eukaryota</taxon>
        <taxon>Fungi</taxon>
        <taxon>Dikarya</taxon>
        <taxon>Ascomycota</taxon>
        <taxon>Pezizomycotina</taxon>
        <taxon>Dothideomycetes</taxon>
        <taxon>Dothideomycetidae</taxon>
        <taxon>Mycosphaerellales</taxon>
        <taxon>Mycosphaerellaceae</taxon>
        <taxon>Dothistroma</taxon>
    </lineage>
</organism>
<comment type="function">
    <text evidence="1 2 3 5 7 8 9">Putative epoxide hydrolase; part of the fragmented gene cluster that mediates the biosynthesis of dothistromin (DOTH), a polyketide toxin very similar in structure to the aflatoxin precursor, versicolorin B (PubMed:12039746, PubMed:17683963, PubMed:22069571, PubMed:23207690, PubMed:23448391). The first step of the pathway is the conversion of acetate to norsolorinic acid (NOR) and requires the fatty acid synthase subunits hexA and hexB, as well as the polyketide synthase pksA (PubMed:16649078, PubMed:23207690). PksA combines a hexanoyl starter unit and 7 malonyl-CoA extender units to synthesize the precursor NOR (By similarity). The hexanoyl starter unit is provided to the acyl-carrier protein (ACP) domain by the fungal fatty acid synthase hexA/hexB (By similarity). The second step is the conversion of NOR to averantin (AVN) and requires the norsolorinic acid ketoreductase nor1, which catalyzes the dehydration of norsolorinic acid to form (1'S)-averantin (PubMed:23207690). The cytochrome P450 monooxygenase avnA then catalyzes the hydroxylation of AVN to 5'hydroxyaverantin (HAVN) (PubMed:23207690). The next step is performed by adhA that transforms HAVN to averufin (AVF) (PubMed:23207690). Averufin might then be converted to hydroxyversicolorone by cypX and avfA (PubMed:23207690). Hydroxyversicolorone is further converted versiconal hemiacetal acetate (VHA) by moxY (PubMed:23207690). VHA is then the substrate for the versiconal hemiacetal acetate esterase est1 to yield versiconal (VAL) (PubMed:23207690). Versicolorin B synthase vbsA then converts VAL to versicolorin B (VERB) by closing the bisfuran ring (PubMed:16649078, PubMed:23207690). Then, the activity of the versicolorin B desaturase verB leads to versicolorin A (VERA) (PubMed:23207690). DotB, a predicted chloroperoxidase, may perform epoxidation of the A-ring of VERA (PubMed:23207690). Alternatively, a cytochrome P450, such as cypX or avnA could catalyze this step (PubMed:23207690). It is also possible that another, uncharacterized, cytochrome P450 enzyme is responsible for this step (PubMed:23207690). Opening of the epoxide could potentially be achieved by the epoxide hydrolase epoA (PubMed:23207690). However, epoA seems not to be required for DOTH biosynthesis, but other epoxide hydrolases may have the ability to complement this hydrolysis (PubMed:23207690). Alternatively, opening of the epoxide ring could be achieved non-enzymatically (PubMed:23207690). The next step is the deoxygenation of ring A to yield the 5,8-dihydroxyanthraquinone which is most likely catalyzed by the NADPH dehydrogenase encoded by ver1 (PubMed:23207690). The last stages of DOTH biosynthesis are proposed to involve hydroxylation of the bisfuran (PubMed:23207690). OrdB and norB might have oxidative roles here (PubMed:23207690). An alternative possibility is that cytochrome P450 monoogenases such as avnA and cypX might perform these steps in addition to previously proposed steps (PubMed:23207690).</text>
</comment>
<comment type="pathway">
    <text evidence="5 8">Mycotoxin biosynthesis.</text>
</comment>
<comment type="similarity">
    <text evidence="6">Belongs to the peptidase S33 family.</text>
</comment>
<dbReference type="EC" id="3.-.-.-" evidence="7"/>
<dbReference type="EMBL" id="KB446546">
    <property type="protein sequence ID" value="EME38863.1"/>
    <property type="molecule type" value="Genomic_DNA"/>
</dbReference>
<dbReference type="SMR" id="M2WIS5"/>
<dbReference type="STRING" id="675120.M2WIS5"/>
<dbReference type="ESTHER" id="mycpj-q30dw8">
    <property type="family name" value="Epoxide_hydrolase"/>
</dbReference>
<dbReference type="EnsemblFungi" id="EME38863">
    <property type="protein sequence ID" value="EME38863"/>
    <property type="gene ID" value="DOTSEDRAFT_57187"/>
</dbReference>
<dbReference type="eggNOG" id="KOG2565">
    <property type="taxonomic scope" value="Eukaryota"/>
</dbReference>
<dbReference type="HOGENOM" id="CLU_019414_0_0_1"/>
<dbReference type="OMA" id="WVELMGR"/>
<dbReference type="OrthoDB" id="3627131at2759"/>
<dbReference type="Proteomes" id="UP000016933">
    <property type="component" value="Unassembled WGS sequence"/>
</dbReference>
<dbReference type="GO" id="GO:0004301">
    <property type="term" value="F:epoxide hydrolase activity"/>
    <property type="evidence" value="ECO:0007669"/>
    <property type="project" value="TreeGrafter"/>
</dbReference>
<dbReference type="GO" id="GO:0097176">
    <property type="term" value="P:epoxide metabolic process"/>
    <property type="evidence" value="ECO:0007669"/>
    <property type="project" value="TreeGrafter"/>
</dbReference>
<dbReference type="Gene3D" id="3.40.50.1820">
    <property type="entry name" value="alpha/beta hydrolase"/>
    <property type="match status" value="1"/>
</dbReference>
<dbReference type="InterPro" id="IPR029058">
    <property type="entry name" value="AB_hydrolase_fold"/>
</dbReference>
<dbReference type="InterPro" id="IPR000639">
    <property type="entry name" value="Epox_hydrolase-like"/>
</dbReference>
<dbReference type="InterPro" id="IPR010497">
    <property type="entry name" value="Epoxide_hydro_N"/>
</dbReference>
<dbReference type="InterPro" id="IPR016292">
    <property type="entry name" value="Epoxide_hydrolase"/>
</dbReference>
<dbReference type="PANTHER" id="PTHR21661">
    <property type="entry name" value="EPOXIDE HYDROLASE 1-RELATED"/>
    <property type="match status" value="1"/>
</dbReference>
<dbReference type="PANTHER" id="PTHR21661:SF39">
    <property type="entry name" value="HYDROLASE, PUTATIVE (AFU_ORTHOLOGUE AFUA_3G08960)-RELATED"/>
    <property type="match status" value="1"/>
</dbReference>
<dbReference type="Pfam" id="PF06441">
    <property type="entry name" value="EHN"/>
    <property type="match status" value="1"/>
</dbReference>
<dbReference type="PIRSF" id="PIRSF001112">
    <property type="entry name" value="Epoxide_hydrolase"/>
    <property type="match status" value="1"/>
</dbReference>
<dbReference type="PRINTS" id="PR00412">
    <property type="entry name" value="EPOXHYDRLASE"/>
</dbReference>
<dbReference type="SUPFAM" id="SSF53474">
    <property type="entry name" value="alpha/beta-Hydrolases"/>
    <property type="match status" value="1"/>
</dbReference>
<feature type="chain" id="PRO_0000443468" description="Putative epoxide hydrolase">
    <location>
        <begin position="1"/>
        <end position="420"/>
    </location>
</feature>
<keyword id="KW-0378">Hydrolase</keyword>
<keyword id="KW-1185">Reference proteome</keyword>
<evidence type="ECO:0000250" key="1">
    <source>
        <dbReference type="UniProtKB" id="Q12437"/>
    </source>
</evidence>
<evidence type="ECO:0000269" key="2">
    <source>
    </source>
</evidence>
<evidence type="ECO:0000269" key="3">
    <source>
    </source>
</evidence>
<evidence type="ECO:0000303" key="4">
    <source>
    </source>
</evidence>
<evidence type="ECO:0000303" key="5">
    <source>
    </source>
</evidence>
<evidence type="ECO:0000305" key="6"/>
<evidence type="ECO:0000305" key="7">
    <source>
    </source>
</evidence>
<evidence type="ECO:0000305" key="8">
    <source>
    </source>
</evidence>
<evidence type="ECO:0000305" key="9">
    <source>
    </source>
</evidence>
<gene>
    <name evidence="4" type="primary">epoA</name>
    <name type="ORF">DOTSEDRAFT_57187</name>
</gene>
<sequence>MEGYTTLPSTATLKPSPFTVSISESKLQTLQDLIRLSPIGPADYNNSSPSTGSKYGIRRDWLINAKKQWEDNFSWRTFEKKLKKYPQYTVPVKGESGETIEIHFIALFSQRQDARPLAFYHGWPSSPFDFLPILDLLTNKYTPETLPYHIIVPSLPGFCFSGSPPIDLDYDMPQAAYLLNNLMIGLGLDGYIAQGGDLGSGISREQAAGCEACKGFHLNMILLPPPANMKELTLEEVEKKAMPNALAFRQSGMAYALEHGTRGGTIGLALQASPVALLCWIGEKMMAWSDSSSQPSLEQILETVSLYWLTDSITRGLYPYRRFASGNEPKINFIEKPLGYSFFPNTYLPCPVSWAKTTANLVQYRRHESGGHFAPWERPRELLEDVEEYVDVAFGKKDSPMMGPKAVEDVSGSGSHARGL</sequence>
<accession>M2WIS5</accession>
<protein>
    <recommendedName>
        <fullName evidence="7">Putative epoxide hydrolase</fullName>
        <ecNumber evidence="7">3.-.-.-</ecNumber>
    </recommendedName>
    <alternativeName>
        <fullName evidence="4">Dothistromin biosynthesis protein epoA</fullName>
    </alternativeName>
</protein>
<proteinExistence type="inferred from homology"/>
<name>EPOA_DOTSN</name>
<reference key="1">
    <citation type="journal article" date="2012" name="PLoS Genet.">
        <title>The genomes of the fungal plant pathogens Cladosporium fulvum and Dothistroma septosporum reveal adaptation to different hosts and lifestyles but also signatures of common ancestry.</title>
        <authorList>
            <person name="de Wit P.J.G.M."/>
            <person name="van der Burgt A."/>
            <person name="Oekmen B."/>
            <person name="Stergiopoulos I."/>
            <person name="Abd-Elsalam K.A."/>
            <person name="Aerts A.L."/>
            <person name="Bahkali A.H."/>
            <person name="Beenen H.G."/>
            <person name="Chettri P."/>
            <person name="Cox M.P."/>
            <person name="Datema E."/>
            <person name="de Vries R.P."/>
            <person name="Dhillon B."/>
            <person name="Ganley A.R."/>
            <person name="Griffiths S.A."/>
            <person name="Guo Y."/>
            <person name="Hamelin R.C."/>
            <person name="Henrissat B."/>
            <person name="Kabir M.S."/>
            <person name="Jashni M.K."/>
            <person name="Kema G."/>
            <person name="Klaubauf S."/>
            <person name="Lapidus A."/>
            <person name="Levasseur A."/>
            <person name="Lindquist E."/>
            <person name="Mehrabi R."/>
            <person name="Ohm R.A."/>
            <person name="Owen T.J."/>
            <person name="Salamov A."/>
            <person name="Schwelm A."/>
            <person name="Schijlen E."/>
            <person name="Sun H."/>
            <person name="van den Burg H.A."/>
            <person name="van Ham R.C.H.J."/>
            <person name="Zhang S."/>
            <person name="Goodwin S.B."/>
            <person name="Grigoriev I.V."/>
            <person name="Collemare J."/>
            <person name="Bradshaw R.E."/>
        </authorList>
    </citation>
    <scope>NUCLEOTIDE SEQUENCE [LARGE SCALE GENOMIC DNA]</scope>
    <source>
        <strain>NZE10 / CBS 128990</strain>
    </source>
</reference>
<reference key="2">
    <citation type="journal article" date="2012" name="PLoS Pathog.">
        <title>Diverse lifestyles and strategies of plant pathogenesis encoded in the genomes of eighteen Dothideomycetes fungi.</title>
        <authorList>
            <person name="Ohm R.A."/>
            <person name="Feau N."/>
            <person name="Henrissat B."/>
            <person name="Schoch C.L."/>
            <person name="Horwitz B.A."/>
            <person name="Barry K.W."/>
            <person name="Condon B.J."/>
            <person name="Copeland A.C."/>
            <person name="Dhillon B."/>
            <person name="Glaser F."/>
            <person name="Hesse C.N."/>
            <person name="Kosti I."/>
            <person name="LaButti K."/>
            <person name="Lindquist E.A."/>
            <person name="Lucas S."/>
            <person name="Salamov A.A."/>
            <person name="Bradshaw R.E."/>
            <person name="Ciuffetti L."/>
            <person name="Hamelin R.C."/>
            <person name="Kema G.H.J."/>
            <person name="Lawrence C."/>
            <person name="Scott J.A."/>
            <person name="Spatafora J.W."/>
            <person name="Turgeon B.G."/>
            <person name="de Wit P.J.G.M."/>
            <person name="Zhong S."/>
            <person name="Goodwin S.B."/>
            <person name="Grigoriev I.V."/>
        </authorList>
    </citation>
    <scope>NUCLEOTIDE SEQUENCE [LARGE SCALE GENOMIC DNA]</scope>
    <source>
        <strain>NZE10 / CBS 128990</strain>
    </source>
</reference>
<reference key="3">
    <citation type="journal article" date="2002" name="Appl. Environ. Microbiol.">
        <title>Dothistroma pini, a forest pathogen, contains homologs of aflatoxin biosynthetic pathway genes.</title>
        <authorList>
            <person name="Bradshaw R.E."/>
            <person name="Bhatnagar D."/>
            <person name="Ganley R.J."/>
            <person name="Gillman C.J."/>
            <person name="Monahan B.J."/>
            <person name="Seconi J.M."/>
        </authorList>
    </citation>
    <scope>FUNCTION</scope>
</reference>
<reference key="4">
    <citation type="journal article" date="2006" name="Mycopathologia">
        <title>A polyketide synthase gene required for biosynthesis of the aflatoxin-like toxin, dothistromin.</title>
        <authorList>
            <person name="Bradshaw R.E."/>
            <person name="Jin H."/>
            <person name="Morgan B.S."/>
            <person name="Schwelm A."/>
            <person name="Teddy O.R."/>
            <person name="Young C.A."/>
            <person name="Zhang S."/>
        </authorList>
    </citation>
    <scope>FUNCTION</scope>
</reference>
<reference key="5">
    <citation type="journal article" date="2007" name="Fungal Genet. Biol.">
        <title>A fragmented aflatoxin-like gene cluster in the forest pathogen Dothistroma septosporum.</title>
        <authorList>
            <person name="Zhang S."/>
            <person name="Schwelm A."/>
            <person name="Jin H."/>
            <person name="Collins L.J."/>
            <person name="Bradshaw R.E."/>
        </authorList>
    </citation>
    <scope>FUNCTION</scope>
</reference>
<reference key="6">
    <citation type="journal article" date="2010" name="Toxins">
        <title>Genetics of dothistromin biosynthesis of Dothistroma septosporum: an update.</title>
        <authorList>
            <person name="Schwelm A."/>
            <person name="Bradshaw R.E."/>
        </authorList>
    </citation>
    <scope>REVIEW ON FUNCTION</scope>
    <scope>PATHWAY</scope>
</reference>
<reference key="7">
    <citation type="journal article" date="2013" name="Fungal Genet. Biol.">
        <title>Dothistromin genes at multiple separate loci are regulated by AflR.</title>
        <authorList>
            <person name="Chettri P."/>
            <person name="Ehrlich K.C."/>
            <person name="Cary J.W."/>
            <person name="Collemare J."/>
            <person name="Cox M.P."/>
            <person name="Griffiths S.A."/>
            <person name="Olson M.A."/>
            <person name="de Wit P.J."/>
            <person name="Bradshaw R.E."/>
        </authorList>
    </citation>
    <scope>FUNCTION</scope>
    <scope>PATHWAY</scope>
</reference>
<reference key="8">
    <citation type="journal article" date="2013" name="New Phytol.">
        <title>Fragmentation of an aflatoxin-like gene cluster in a forest pathogen.</title>
        <authorList>
            <person name="Bradshaw R.E."/>
            <person name="Slot J.C."/>
            <person name="Moore G.G."/>
            <person name="Chettri P."/>
            <person name="de Wit P.J."/>
            <person name="Ehrlich K.C."/>
            <person name="Ganley A.R."/>
            <person name="Olson M.A."/>
            <person name="Rokas A."/>
            <person name="Carbone I."/>
            <person name="Cox M.P."/>
        </authorList>
    </citation>
    <scope>FUNCTION</scope>
</reference>